<organism>
    <name type="scientific">Penicillium crustosum</name>
    <name type="common">Blue mold fungus</name>
    <dbReference type="NCBI Taxonomy" id="36656"/>
    <lineage>
        <taxon>Eukaryota</taxon>
        <taxon>Fungi</taxon>
        <taxon>Dikarya</taxon>
        <taxon>Ascomycota</taxon>
        <taxon>Pezizomycotina</taxon>
        <taxon>Eurotiomycetes</taxon>
        <taxon>Eurotiomycetidae</taxon>
        <taxon>Eurotiales</taxon>
        <taxon>Aspergillaceae</taxon>
        <taxon>Penicillium</taxon>
    </lineage>
</organism>
<evidence type="ECO:0000250" key="1">
    <source>
        <dbReference type="UniProtKB" id="A0A0E0RXA7"/>
    </source>
</evidence>
<evidence type="ECO:0000250" key="2">
    <source>
        <dbReference type="UniProtKB" id="A0A161CKG1"/>
    </source>
</evidence>
<evidence type="ECO:0000255" key="3"/>
<evidence type="ECO:0000269" key="4">
    <source>
    </source>
</evidence>
<evidence type="ECO:0000269" key="5">
    <source>
    </source>
</evidence>
<evidence type="ECO:0000303" key="6">
    <source>
    </source>
</evidence>
<evidence type="ECO:0000305" key="7"/>
<evidence type="ECO:0000305" key="8">
    <source>
    </source>
</evidence>
<sequence>MPNYEKVEFQTLDGLTLRGRLFRAEGAGGNRTAAVVITPPYVIVQDVMVSDIAVYFSQQGITALTYDTRSFGESDGQPRCELDLSKQVDDYSDAFTFLASLPSVDPSKIGFWGISFCATVALNAAALDRRSRFVISVGPIVKASDENPYPIDKVHRVLTKALRDRESQLRGNTPFYVESTCEDGSNPTGFGPELGIEAYELVQRIAASGIAPNFSTQLTLQSFAKILRWHPMQDIKWLGETPMMLMIPGDDTVSLPEEQMRLFDMITGPKRVEVAAGKSHFNVLASEGFEGLMDMQVEFIKQTLGLSS</sequence>
<accession>A0A481WQ01</accession>
<gene>
    <name evidence="6" type="primary">claH</name>
</gene>
<keyword id="KW-0808">Transferase</keyword>
<feature type="chain" id="PRO_0000455060" description="Polyketide transferase claH">
    <location>
        <begin position="1"/>
        <end position="308"/>
    </location>
</feature>
<feature type="region of interest" description="Abhydrolase domain" evidence="3">
    <location>
        <begin position="50"/>
        <end position="280"/>
    </location>
</feature>
<reference key="1">
    <citation type="journal article" date="2019" name="J. Am. Chem. Soc.">
        <title>Peniphenone and penilactone formation in Penicillium crustosum via 1,4-Michael additions of ortho-quinone methide from hydroxyclavatol to gamma-butyrolactones from Crustosic Acid.</title>
        <authorList>
            <person name="Fan J."/>
            <person name="Liao G."/>
            <person name="Kindinger F."/>
            <person name="Ludwig-Radtke L."/>
            <person name="Yin W.B."/>
            <person name="Li S.M."/>
        </authorList>
    </citation>
    <scope>NUCLEOTIDE SEQUENCE [GENOMIC DNA]</scope>
    <scope>FUNCTION</scope>
    <source>
        <strain>PRB-2</strain>
    </source>
</reference>
<reference key="2">
    <citation type="journal article" date="2020" name="J. Org. Chem.">
        <title>Increasing Structural Diversity of Natural Products by Michael Addition with ortho-Quinone Methide as the Acceptor.</title>
        <authorList>
            <person name="Liao G."/>
            <person name="Fan J."/>
            <person name="Ludwig-Radtke L."/>
            <person name="Backhaus K."/>
            <person name="Li S.M."/>
        </authorList>
    </citation>
    <scope>FUNCTION</scope>
</reference>
<protein>
    <recommendedName>
        <fullName evidence="6">Polyketide transferase claH</fullName>
        <ecNumber evidence="8">2.3.-.-</ecNumber>
    </recommendedName>
    <alternativeName>
        <fullName evidence="6">Clavatol biosynthesis cluster protein H</fullName>
    </alternativeName>
</protein>
<name>CLAH_PENCR</name>
<dbReference type="EC" id="2.3.-.-" evidence="8"/>
<dbReference type="EMBL" id="MK360918">
    <property type="protein sequence ID" value="QBK15046.1"/>
    <property type="molecule type" value="Genomic_DNA"/>
</dbReference>
<dbReference type="SMR" id="A0A481WQ01"/>
<dbReference type="ESTHER" id="pencr-clah">
    <property type="family name" value="Thiohydrolase"/>
</dbReference>
<dbReference type="OrthoDB" id="2498029at2759"/>
<dbReference type="GO" id="GO:0016740">
    <property type="term" value="F:transferase activity"/>
    <property type="evidence" value="ECO:0007669"/>
    <property type="project" value="UniProtKB-KW"/>
</dbReference>
<dbReference type="GO" id="GO:0017000">
    <property type="term" value="P:antibiotic biosynthetic process"/>
    <property type="evidence" value="ECO:0007669"/>
    <property type="project" value="UniProtKB-ARBA"/>
</dbReference>
<dbReference type="GO" id="GO:0072330">
    <property type="term" value="P:monocarboxylic acid biosynthetic process"/>
    <property type="evidence" value="ECO:0007669"/>
    <property type="project" value="UniProtKB-ARBA"/>
</dbReference>
<dbReference type="Gene3D" id="1.10.10.800">
    <property type="match status" value="1"/>
</dbReference>
<dbReference type="Gene3D" id="3.40.50.1820">
    <property type="entry name" value="alpha/beta hydrolase"/>
    <property type="match status" value="1"/>
</dbReference>
<dbReference type="InterPro" id="IPR029058">
    <property type="entry name" value="AB_hydrolase_fold"/>
</dbReference>
<dbReference type="InterPro" id="IPR022742">
    <property type="entry name" value="Hydrolase_4"/>
</dbReference>
<dbReference type="InterPro" id="IPR051411">
    <property type="entry name" value="Polyketide_trans_af380"/>
</dbReference>
<dbReference type="PANTHER" id="PTHR47751:SF2">
    <property type="entry name" value="DLTD N-TERMINAL DOMAIN PROTEIN (AFU_ORTHOLOGUE AFUA_8G00380)-RELATED"/>
    <property type="match status" value="1"/>
</dbReference>
<dbReference type="PANTHER" id="PTHR47751">
    <property type="entry name" value="SUPERFAMILY HYDROLASE, PUTATIVE (AFU_ORTHOLOGUE AFUA_2G16580)-RELATED"/>
    <property type="match status" value="1"/>
</dbReference>
<dbReference type="Pfam" id="PF12146">
    <property type="entry name" value="Hydrolase_4"/>
    <property type="match status" value="1"/>
</dbReference>
<dbReference type="SUPFAM" id="SSF53474">
    <property type="entry name" value="alpha/beta-Hydrolases"/>
    <property type="match status" value="1"/>
</dbReference>
<comment type="function">
    <text evidence="1 2 4 5 8">Polyketide transferase; part of the cla gene cluster that produces clavatol and ortho-quinone methide (PubMed:30811183). The clavatol biosynthesis cluster cla and the terrestric acid cluster tra are both involved in the production of peniphenones and penilactones (PubMed:30811183). The non-reducing PKS claF is responsible for the formation of clavatol from successive condensations of 3 malonyl-CoA units, presumably with a simple acetyl-CoA starter unit, and 2 methylation steps (PubMed:30811183). The esterase claE probably collaborates with claF by catalyzing the hydrolysis of ACP-bound acyl intermediates to free the ACP from stalled intermediates (By similarity). The clavatol oxidase claD then converts clavatol to hydroxyclavatol (PubMed:30811183). Spontaneous dehydration of hydroxyclavatol leads to the accumulation of the highly active ortho-quinone methide (PubMed:30811183, PubMed:31860310). On the other hand, the PKS-NRPS hybrid traA is involved in the formation of crustosic acid, with the help of traB and traD (PubMed:30811183). The polyketide synthase module (PKS) of traA is responsible for the synthesis of the polyketide backbone via the condensation of an acetyl-CoA starter unit with 3 malonyl-CoA units (PubMed:30811183). The downstream nonribosomal peptide synthetase (NRPS) module then amidates the carboxyl end of the polyketide with L-malic acid (PubMed:30811183). Because traA lacks a designated enoylreductase (ER) domain, the required activity is provided the enoyl reductase traG (By similarity). Crustosic acid undergoes decarboxylation and isomerization to the terrestric acid, catalyzed by the 2-oxoglutarate-dependent dioxygenase traH (PubMed:30811183). Both acids are further converted to the 2 gamma-butyrolactones (R)-5-methyltetronic acid and (S)-5-carboxylmethyltetronic acid, with involvement of the cytochrome P450 monooxygenase claJ (PubMed:30811183). Spontaneous addition of the methide to these gamma-butyrolactones leads to peniphenone D and penilactone D, which undergo again stereospecific attacking by methide to give penilactones A and B (PubMed:30811183, PubMed:31860310). The function of the polyketide transferase claH has not been investigated yet (Probable).</text>
</comment>
<comment type="pathway">
    <text evidence="8">Secondary metabolite biosynthesis.</text>
</comment>
<comment type="similarity">
    <text evidence="7">Belongs to the polyketide transferase af380 family.</text>
</comment>
<proteinExistence type="inferred from homology"/>